<proteinExistence type="inferred from homology"/>
<comment type="function">
    <text evidence="1">O-methyltransferase that catalyzes the 2 O-methylation steps in the ubiquinone biosynthetic pathway.</text>
</comment>
<comment type="catalytic activity">
    <reaction evidence="1">
        <text>a 3-demethylubiquinol + S-adenosyl-L-methionine = a ubiquinol + S-adenosyl-L-homocysteine + H(+)</text>
        <dbReference type="Rhea" id="RHEA:44380"/>
        <dbReference type="Rhea" id="RHEA-COMP:9566"/>
        <dbReference type="Rhea" id="RHEA-COMP:10914"/>
        <dbReference type="ChEBI" id="CHEBI:15378"/>
        <dbReference type="ChEBI" id="CHEBI:17976"/>
        <dbReference type="ChEBI" id="CHEBI:57856"/>
        <dbReference type="ChEBI" id="CHEBI:59789"/>
        <dbReference type="ChEBI" id="CHEBI:84422"/>
        <dbReference type="EC" id="2.1.1.64"/>
    </reaction>
</comment>
<comment type="catalytic activity">
    <reaction evidence="1">
        <text>a 3-(all-trans-polyprenyl)benzene-1,2-diol + S-adenosyl-L-methionine = a 2-methoxy-6-(all-trans-polyprenyl)phenol + S-adenosyl-L-homocysteine + H(+)</text>
        <dbReference type="Rhea" id="RHEA:31411"/>
        <dbReference type="Rhea" id="RHEA-COMP:9550"/>
        <dbReference type="Rhea" id="RHEA-COMP:9551"/>
        <dbReference type="ChEBI" id="CHEBI:15378"/>
        <dbReference type="ChEBI" id="CHEBI:57856"/>
        <dbReference type="ChEBI" id="CHEBI:59789"/>
        <dbReference type="ChEBI" id="CHEBI:62729"/>
        <dbReference type="ChEBI" id="CHEBI:62731"/>
        <dbReference type="EC" id="2.1.1.222"/>
    </reaction>
</comment>
<comment type="pathway">
    <text evidence="1">Cofactor biosynthesis; ubiquinone biosynthesis.</text>
</comment>
<comment type="similarity">
    <text evidence="1">Belongs to the methyltransferase superfamily. UbiG/COQ3 family.</text>
</comment>
<protein>
    <recommendedName>
        <fullName evidence="1">Ubiquinone biosynthesis O-methyltransferase</fullName>
    </recommendedName>
    <alternativeName>
        <fullName evidence="1">2-polyprenyl-6-hydroxyphenol methylase</fullName>
        <ecNumber evidence="1">2.1.1.222</ecNumber>
    </alternativeName>
    <alternativeName>
        <fullName evidence="1">3-demethylubiquinone 3-O-methyltransferase</fullName>
        <ecNumber evidence="1">2.1.1.64</ecNumber>
    </alternativeName>
</protein>
<sequence length="248" mass="27152">MSEAAKSTIDQSEVDRFSAMAAEWWSPTGKFKPLHKFNPVRLAYIRDHACENFGRDPKSARPLEGLRVLDIGCGGGLLSEPVARMGASVVGADPSEKNIGIASTHAKASGAPVDYRAVTAEQLAEAGETFDIVLNMEVVEHVADVEFFLTTCAKMVRPGGLMYVATINRTMKAAALAIFAAENVLRWLPRGTHQYEKLVRPEEIEKPLAADGLDIIARTGVFYSPLQDRWNLSKDMDVNYMLLAKRAG</sequence>
<keyword id="KW-0489">Methyltransferase</keyword>
<keyword id="KW-0949">S-adenosyl-L-methionine</keyword>
<keyword id="KW-0808">Transferase</keyword>
<keyword id="KW-0831">Ubiquinone biosynthesis</keyword>
<reference key="1">
    <citation type="journal article" date="2009" name="J. Bacteriol.">
        <title>Genome sequences of three Agrobacterium biovars help elucidate the evolution of multichromosome genomes in bacteria.</title>
        <authorList>
            <person name="Slater S.C."/>
            <person name="Goldman B.S."/>
            <person name="Goodner B."/>
            <person name="Setubal J.C."/>
            <person name="Farrand S.K."/>
            <person name="Nester E.W."/>
            <person name="Burr T.J."/>
            <person name="Banta L."/>
            <person name="Dickerman A.W."/>
            <person name="Paulsen I."/>
            <person name="Otten L."/>
            <person name="Suen G."/>
            <person name="Welch R."/>
            <person name="Almeida N.F."/>
            <person name="Arnold F."/>
            <person name="Burton O.T."/>
            <person name="Du Z."/>
            <person name="Ewing A."/>
            <person name="Godsy E."/>
            <person name="Heisel S."/>
            <person name="Houmiel K.L."/>
            <person name="Jhaveri J."/>
            <person name="Lu J."/>
            <person name="Miller N.M."/>
            <person name="Norton S."/>
            <person name="Chen Q."/>
            <person name="Phoolcharoen W."/>
            <person name="Ohlin V."/>
            <person name="Ondrusek D."/>
            <person name="Pride N."/>
            <person name="Stricklin S.L."/>
            <person name="Sun J."/>
            <person name="Wheeler C."/>
            <person name="Wilson L."/>
            <person name="Zhu H."/>
            <person name="Wood D.W."/>
        </authorList>
    </citation>
    <scope>NUCLEOTIDE SEQUENCE [LARGE SCALE GENOMIC DNA]</scope>
    <source>
        <strain>K84 / ATCC BAA-868</strain>
    </source>
</reference>
<organism>
    <name type="scientific">Rhizobium rhizogenes (strain K84 / ATCC BAA-868)</name>
    <name type="common">Agrobacterium radiobacter</name>
    <dbReference type="NCBI Taxonomy" id="311403"/>
    <lineage>
        <taxon>Bacteria</taxon>
        <taxon>Pseudomonadati</taxon>
        <taxon>Pseudomonadota</taxon>
        <taxon>Alphaproteobacteria</taxon>
        <taxon>Hyphomicrobiales</taxon>
        <taxon>Rhizobiaceae</taxon>
        <taxon>Rhizobium/Agrobacterium group</taxon>
        <taxon>Rhizobium</taxon>
    </lineage>
</organism>
<gene>
    <name evidence="1" type="primary">ubiG</name>
    <name type="ordered locus">Arad_4133</name>
</gene>
<dbReference type="EC" id="2.1.1.222" evidence="1"/>
<dbReference type="EC" id="2.1.1.64" evidence="1"/>
<dbReference type="EMBL" id="CP000628">
    <property type="protein sequence ID" value="ACM27910.1"/>
    <property type="molecule type" value="Genomic_DNA"/>
</dbReference>
<dbReference type="RefSeq" id="WP_012652534.1">
    <property type="nucleotide sequence ID" value="NC_011985.1"/>
</dbReference>
<dbReference type="SMR" id="B9JB78"/>
<dbReference type="STRING" id="311403.Arad_4133"/>
<dbReference type="KEGG" id="ara:Arad_4133"/>
<dbReference type="eggNOG" id="COG2227">
    <property type="taxonomic scope" value="Bacteria"/>
</dbReference>
<dbReference type="HOGENOM" id="CLU_042432_0_0_5"/>
<dbReference type="UniPathway" id="UPA00232"/>
<dbReference type="Proteomes" id="UP000001600">
    <property type="component" value="Chromosome 1"/>
</dbReference>
<dbReference type="GO" id="GO:0102208">
    <property type="term" value="F:2-polyprenyl-6-hydroxyphenol methylase activity"/>
    <property type="evidence" value="ECO:0007669"/>
    <property type="project" value="UniProtKB-EC"/>
</dbReference>
<dbReference type="GO" id="GO:0061542">
    <property type="term" value="F:3-demethylubiquinol 3-O-methyltransferase activity"/>
    <property type="evidence" value="ECO:0007669"/>
    <property type="project" value="UniProtKB-UniRule"/>
</dbReference>
<dbReference type="GO" id="GO:0010420">
    <property type="term" value="F:polyprenyldihydroxybenzoate methyltransferase activity"/>
    <property type="evidence" value="ECO:0007669"/>
    <property type="project" value="InterPro"/>
</dbReference>
<dbReference type="GO" id="GO:0032259">
    <property type="term" value="P:methylation"/>
    <property type="evidence" value="ECO:0007669"/>
    <property type="project" value="UniProtKB-KW"/>
</dbReference>
<dbReference type="CDD" id="cd02440">
    <property type="entry name" value="AdoMet_MTases"/>
    <property type="match status" value="1"/>
</dbReference>
<dbReference type="Gene3D" id="3.40.50.150">
    <property type="entry name" value="Vaccinia Virus protein VP39"/>
    <property type="match status" value="1"/>
</dbReference>
<dbReference type="HAMAP" id="MF_00472">
    <property type="entry name" value="UbiG"/>
    <property type="match status" value="1"/>
</dbReference>
<dbReference type="InterPro" id="IPR013216">
    <property type="entry name" value="Methyltransf_11"/>
</dbReference>
<dbReference type="InterPro" id="IPR029063">
    <property type="entry name" value="SAM-dependent_MTases_sf"/>
</dbReference>
<dbReference type="InterPro" id="IPR010233">
    <property type="entry name" value="UbiG_MeTrfase"/>
</dbReference>
<dbReference type="NCBIfam" id="TIGR01983">
    <property type="entry name" value="UbiG"/>
    <property type="match status" value="1"/>
</dbReference>
<dbReference type="PANTHER" id="PTHR43464">
    <property type="entry name" value="METHYLTRANSFERASE"/>
    <property type="match status" value="1"/>
</dbReference>
<dbReference type="PANTHER" id="PTHR43464:SF19">
    <property type="entry name" value="UBIQUINONE BIOSYNTHESIS O-METHYLTRANSFERASE, MITOCHONDRIAL"/>
    <property type="match status" value="1"/>
</dbReference>
<dbReference type="Pfam" id="PF08241">
    <property type="entry name" value="Methyltransf_11"/>
    <property type="match status" value="1"/>
</dbReference>
<dbReference type="SUPFAM" id="SSF53335">
    <property type="entry name" value="S-adenosyl-L-methionine-dependent methyltransferases"/>
    <property type="match status" value="1"/>
</dbReference>
<evidence type="ECO:0000255" key="1">
    <source>
        <dbReference type="HAMAP-Rule" id="MF_00472"/>
    </source>
</evidence>
<feature type="chain" id="PRO_1000135499" description="Ubiquinone biosynthesis O-methyltransferase">
    <location>
        <begin position="1"/>
        <end position="248"/>
    </location>
</feature>
<feature type="binding site" evidence="1">
    <location>
        <position position="41"/>
    </location>
    <ligand>
        <name>S-adenosyl-L-methionine</name>
        <dbReference type="ChEBI" id="CHEBI:59789"/>
    </ligand>
</feature>
<feature type="binding site" evidence="1">
    <location>
        <position position="72"/>
    </location>
    <ligand>
        <name>S-adenosyl-L-methionine</name>
        <dbReference type="ChEBI" id="CHEBI:59789"/>
    </ligand>
</feature>
<feature type="binding site" evidence="1">
    <location>
        <position position="93"/>
    </location>
    <ligand>
        <name>S-adenosyl-L-methionine</name>
        <dbReference type="ChEBI" id="CHEBI:59789"/>
    </ligand>
</feature>
<feature type="binding site" evidence="1">
    <location>
        <position position="136"/>
    </location>
    <ligand>
        <name>S-adenosyl-L-methionine</name>
        <dbReference type="ChEBI" id="CHEBI:59789"/>
    </ligand>
</feature>
<accession>B9JB78</accession>
<name>UBIG_RHIR8</name>